<accession>Q4WED9</accession>
<proteinExistence type="evidence at transcript level"/>
<comment type="function">
    <text evidence="2">Isocyanide synthase; part of the gene cluster that mediates the biosynthesis of the isocyanide xanthocillin and its derivatives (PubMed:29844112). The first step of the pathway consists in the conversion of tyrosine into a vinyl-isonitrile intermediate by the isocyanide synthase xanB (PubMed:29844112). Subsequent oxidative dimerization of this intermediate to form xanthocillin may involve the cytochrome P450 monooxygenase xanG, whose expression is coregulated with that of XanB (PubMed:29844112). Xanthocillin can be further modified by the isonitrile hydratase-like protein xanA which introduces N-formyl groups and the methyltransferase xanE which introduces methyl groups, leading to the production of several derivatives including fumiformamide (PubMed:29844112). Finally, fumiformamide can be subject to both oxidative and reductive cyclization to yield melanocins E and F, respectively (PubMed:29844112).</text>
</comment>
<comment type="pathway">
    <text evidence="2">Secondary metabolite biosynthesis.</text>
</comment>
<comment type="induction">
    <text evidence="2">Expressed during copper starvation via the regulation of both aceA and macA transcription factors.</text>
</comment>
<comment type="disruption phenotype">
    <text evidence="2">Abolishes the production of xanthocillin derivatives including a dimethoxyl formyl xanthocillin derivative, the sulfated formyl xanthocillin derivative fumiformamide, a 1,2-diformylamido derivative named melanocin E, and the imidazole-containing melanocin F.</text>
</comment>
<comment type="similarity">
    <text evidence="4">Belongs to the isocyanide synthase family.</text>
</comment>
<name>XANB_ASPFU</name>
<keyword id="KW-0560">Oxidoreductase</keyword>
<keyword id="KW-1185">Reference proteome</keyword>
<sequence length="761" mass="85867">MIAVLQNPQNAAISYSGEPQEHNLLGSYETKAPNVETSEIAASSSSSEAPEDLAEEHHRNEASLQQPLSEVDRHEQPAASDNTRSGLDIPPVTVSTPQSSDNPLVESKEAVPVTFKDEGKGTKADPSHLLTEALETTNGEENSPISEDEATAIAVLKVIERYGVNFEKTGESWQGLTSFIPTVVEQVKKREAVRMILPAFPFKSPNARDKVLGVMPDLGEELALYHLNGLCENIGRVYEPGADVYISSDGLVYNDILGVPDETVWEYGEALRRMAVEKELHHVKFIRLFELLEHPWIPLTSAEQAKSYYLAHAQCLRRELMYRFEDRSFDADAAIRSDNDTCLTYRGYIKFLTKDLAPQMDTQYTSKKARAAHIAQIARSMIVRGKMFAAAIKANRADYVRLSIHESNGARKLSISLVPQVRGVLGYTPWHSSIAVDADGTLRAVHAEDVRETHELVYKNGQPYYFREKSKLFDWVEDGLRVKFEPLYPCGLIIRPSDIDDSRPPPSISHLPMHKVRQLSTGLSPVVLRGFRETLKEELYVQKASELGTILPWSFGIIQKVRDAGRTDKLGNNVTSNEAMPMHYDGMFKFEEETDPVTGEVKRVQKPPGYQFFTCPATAPKGSGYTLFASSRLFFRYLPLPWTTERLQKVTWGMDNDGFWDAKLKNLPLVVPHPVTGLPCMRWHQPWDSTKTKFSTCAVTIENDEQELASVVDDLTYDYRVCLRFSWEQGDLLVSDNTAMLHTRTGYKTNCERELWRIHFD</sequence>
<protein>
    <recommendedName>
        <fullName evidence="3">Isocyanide synthase xanB</fullName>
        <shortName evidence="3">ICS xanB</shortName>
        <ecNumber evidence="5">1.-.-.-</ecNumber>
    </recommendedName>
    <alternativeName>
        <fullName evidence="3">Xanthocillin biosynthesis cluster protein B</fullName>
    </alternativeName>
</protein>
<feature type="chain" id="PRO_0000445289" description="Isocyanide synthase xanB">
    <location>
        <begin position="1"/>
        <end position="761"/>
    </location>
</feature>
<feature type="region of interest" description="Disordered" evidence="1">
    <location>
        <begin position="24"/>
        <end position="128"/>
    </location>
</feature>
<feature type="compositionally biased region" description="Low complexity" evidence="1">
    <location>
        <begin position="36"/>
        <end position="48"/>
    </location>
</feature>
<feature type="compositionally biased region" description="Polar residues" evidence="1">
    <location>
        <begin position="93"/>
        <end position="102"/>
    </location>
</feature>
<feature type="compositionally biased region" description="Basic and acidic residues" evidence="1">
    <location>
        <begin position="115"/>
        <end position="126"/>
    </location>
</feature>
<evidence type="ECO:0000256" key="1">
    <source>
        <dbReference type="SAM" id="MobiDB-lite"/>
    </source>
</evidence>
<evidence type="ECO:0000269" key="2">
    <source>
    </source>
</evidence>
<evidence type="ECO:0000303" key="3">
    <source>
    </source>
</evidence>
<evidence type="ECO:0000305" key="4"/>
<evidence type="ECO:0000305" key="5">
    <source>
    </source>
</evidence>
<organism>
    <name type="scientific">Aspergillus fumigatus (strain ATCC MYA-4609 / CBS 101355 / FGSC A1100 / Af293)</name>
    <name type="common">Neosartorya fumigata</name>
    <dbReference type="NCBI Taxonomy" id="330879"/>
    <lineage>
        <taxon>Eukaryota</taxon>
        <taxon>Fungi</taxon>
        <taxon>Dikarya</taxon>
        <taxon>Ascomycota</taxon>
        <taxon>Pezizomycotina</taxon>
        <taxon>Eurotiomycetes</taxon>
        <taxon>Eurotiomycetidae</taxon>
        <taxon>Eurotiales</taxon>
        <taxon>Aspergillaceae</taxon>
        <taxon>Aspergillus</taxon>
        <taxon>Aspergillus subgen. Fumigati</taxon>
    </lineage>
</organism>
<gene>
    <name evidence="3" type="primary">xanB</name>
    <name type="ORF">AFUA_5G02660</name>
</gene>
<dbReference type="EC" id="1.-.-.-" evidence="5"/>
<dbReference type="EMBL" id="AAHF01000011">
    <property type="protein sequence ID" value="EAL86038.2"/>
    <property type="molecule type" value="Genomic_DNA"/>
</dbReference>
<dbReference type="RefSeq" id="XP_748076.2">
    <property type="nucleotide sequence ID" value="XM_742983.2"/>
</dbReference>
<dbReference type="SMR" id="Q4WED9"/>
<dbReference type="STRING" id="330879.Q4WED9"/>
<dbReference type="EnsemblFungi" id="EAL86038">
    <property type="protein sequence ID" value="EAL86038"/>
    <property type="gene ID" value="AFUA_5G02660"/>
</dbReference>
<dbReference type="GeneID" id="3505484"/>
<dbReference type="KEGG" id="afm:AFUA_5G02660"/>
<dbReference type="VEuPathDB" id="FungiDB:Afu5g02660"/>
<dbReference type="eggNOG" id="ENOG502RNZ1">
    <property type="taxonomic scope" value="Eukaryota"/>
</dbReference>
<dbReference type="HOGENOM" id="CLU_015940_0_0_1"/>
<dbReference type="InParanoid" id="Q4WED9"/>
<dbReference type="OMA" id="FEHLYPC"/>
<dbReference type="OrthoDB" id="429813at2759"/>
<dbReference type="Proteomes" id="UP000002530">
    <property type="component" value="Chromosome 5"/>
</dbReference>
<dbReference type="GO" id="GO:0016491">
    <property type="term" value="F:oxidoreductase activity"/>
    <property type="evidence" value="ECO:0007669"/>
    <property type="project" value="UniProtKB-KW"/>
</dbReference>
<dbReference type="FunFam" id="3.60.130.10:FF:000012">
    <property type="entry name" value="Pyoverdine/dityrosine biosynthesis protein, putative (AFU_orthologue AFUA_5G02660)"/>
    <property type="match status" value="1"/>
</dbReference>
<dbReference type="Gene3D" id="3.60.130.10">
    <property type="entry name" value="Clavaminate synthase-like"/>
    <property type="match status" value="1"/>
</dbReference>
<dbReference type="InterPro" id="IPR007817">
    <property type="entry name" value="Isocyanide_synthase_DIT1"/>
</dbReference>
<dbReference type="InterPro" id="IPR042098">
    <property type="entry name" value="TauD-like_sf"/>
</dbReference>
<dbReference type="InterPro" id="IPR003819">
    <property type="entry name" value="TauD/TfdA-like"/>
</dbReference>
<dbReference type="PANTHER" id="PTHR37285:SF6">
    <property type="entry name" value="BIOSYNTHESIS PROTEIN, PUTATIVE (AFU_ORTHOLOGUE AFUA_5G02660)-RELATED"/>
    <property type="match status" value="1"/>
</dbReference>
<dbReference type="PANTHER" id="PTHR37285">
    <property type="entry name" value="SPORE WALL MATURATION PROTEIN DIT1"/>
    <property type="match status" value="1"/>
</dbReference>
<dbReference type="Pfam" id="PF05141">
    <property type="entry name" value="DIT1_PvcA"/>
    <property type="match status" value="1"/>
</dbReference>
<dbReference type="Pfam" id="PF02668">
    <property type="entry name" value="TauD"/>
    <property type="match status" value="1"/>
</dbReference>
<dbReference type="SUPFAM" id="SSF51197">
    <property type="entry name" value="Clavaminate synthase-like"/>
    <property type="match status" value="1"/>
</dbReference>
<reference key="1">
    <citation type="journal article" date="2005" name="Nature">
        <title>Genomic sequence of the pathogenic and allergenic filamentous fungus Aspergillus fumigatus.</title>
        <authorList>
            <person name="Nierman W.C."/>
            <person name="Pain A."/>
            <person name="Anderson M.J."/>
            <person name="Wortman J.R."/>
            <person name="Kim H.S."/>
            <person name="Arroyo J."/>
            <person name="Berriman M."/>
            <person name="Abe K."/>
            <person name="Archer D.B."/>
            <person name="Bermejo C."/>
            <person name="Bennett J.W."/>
            <person name="Bowyer P."/>
            <person name="Chen D."/>
            <person name="Collins M."/>
            <person name="Coulsen R."/>
            <person name="Davies R."/>
            <person name="Dyer P.S."/>
            <person name="Farman M.L."/>
            <person name="Fedorova N."/>
            <person name="Fedorova N.D."/>
            <person name="Feldblyum T.V."/>
            <person name="Fischer R."/>
            <person name="Fosker N."/>
            <person name="Fraser A."/>
            <person name="Garcia J.L."/>
            <person name="Garcia M.J."/>
            <person name="Goble A."/>
            <person name="Goldman G.H."/>
            <person name="Gomi K."/>
            <person name="Griffith-Jones S."/>
            <person name="Gwilliam R."/>
            <person name="Haas B.J."/>
            <person name="Haas H."/>
            <person name="Harris D.E."/>
            <person name="Horiuchi H."/>
            <person name="Huang J."/>
            <person name="Humphray S."/>
            <person name="Jimenez J."/>
            <person name="Keller N."/>
            <person name="Khouri H."/>
            <person name="Kitamoto K."/>
            <person name="Kobayashi T."/>
            <person name="Konzack S."/>
            <person name="Kulkarni R."/>
            <person name="Kumagai T."/>
            <person name="Lafton A."/>
            <person name="Latge J.-P."/>
            <person name="Li W."/>
            <person name="Lord A."/>
            <person name="Lu C."/>
            <person name="Majoros W.H."/>
            <person name="May G.S."/>
            <person name="Miller B.L."/>
            <person name="Mohamoud Y."/>
            <person name="Molina M."/>
            <person name="Monod M."/>
            <person name="Mouyna I."/>
            <person name="Mulligan S."/>
            <person name="Murphy L.D."/>
            <person name="O'Neil S."/>
            <person name="Paulsen I."/>
            <person name="Penalva M.A."/>
            <person name="Pertea M."/>
            <person name="Price C."/>
            <person name="Pritchard B.L."/>
            <person name="Quail M.A."/>
            <person name="Rabbinowitsch E."/>
            <person name="Rawlins N."/>
            <person name="Rajandream M.A."/>
            <person name="Reichard U."/>
            <person name="Renauld H."/>
            <person name="Robson G.D."/>
            <person name="Rodriguez de Cordoba S."/>
            <person name="Rodriguez-Pena J.M."/>
            <person name="Ronning C.M."/>
            <person name="Rutter S."/>
            <person name="Salzberg S.L."/>
            <person name="Sanchez M."/>
            <person name="Sanchez-Ferrero J.C."/>
            <person name="Saunders D."/>
            <person name="Seeger K."/>
            <person name="Squares R."/>
            <person name="Squares S."/>
            <person name="Takeuchi M."/>
            <person name="Tekaia F."/>
            <person name="Turner G."/>
            <person name="Vazquez de Aldana C.R."/>
            <person name="Weidman J."/>
            <person name="White O."/>
            <person name="Woodward J.R."/>
            <person name="Yu J.-H."/>
            <person name="Fraser C.M."/>
            <person name="Galagan J.E."/>
            <person name="Asai K."/>
            <person name="Machida M."/>
            <person name="Hall N."/>
            <person name="Barrell B.G."/>
            <person name="Denning D.W."/>
        </authorList>
    </citation>
    <scope>NUCLEOTIDE SEQUENCE [LARGE SCALE GENOMIC DNA]</scope>
    <source>
        <strain>ATCC MYA-4609 / CBS 101355 / FGSC A1100 / Af293</strain>
    </source>
</reference>
<reference key="2">
    <citation type="journal article" date="2018" name="MBio">
        <title>Fungal isocyanide synthases and xanthocillin biosynthesis in Aspergillus fumigatus.</title>
        <authorList>
            <person name="Lim F.Y."/>
            <person name="Won T.H."/>
            <person name="Raffa N."/>
            <person name="Baccile J.A."/>
            <person name="Wisecaver J."/>
            <person name="Rokas A."/>
            <person name="Schroeder F.C."/>
            <person name="Keller N.P."/>
        </authorList>
    </citation>
    <scope>FUNCTION</scope>
    <scope>INDUCTION</scope>
    <scope>DISRUPTION PHENOTYPE</scope>
    <scope>PATHWAY</scope>
</reference>